<protein>
    <recommendedName>
        <fullName>Basal cell adhesion molecule</fullName>
    </recommendedName>
    <alternativeName>
        <fullName>B-CAM cell surface glycoprotein</fullName>
    </alternativeName>
    <alternativeName>
        <fullName>Lutheran antigen</fullName>
    </alternativeName>
    <cdAntigenName>CD239</cdAntigenName>
</protein>
<comment type="function">
    <text evidence="2">Transmembrane glycoprotein that functions as both a receptor and an adhesion molecule playing a crucial role in cell adhesion, motility, migration and invasion. Extracellular domain enables binding to extracellular matrix proteins, such as laminin, integrin and other ligands while its intracellular domain interacts with cytoskeletal proteins like hemoglobin, facilitating cell signal transduction. Serves as a receptor for laminin alpha-5/LAMA5 to promote cell adhesion. Mechanistically, JAK2 induces BCAM phosphorylation and activates its adhesion to laminin by stimulating a Rap1/AKT signaling pathway in the absence of EPOR.</text>
</comment>
<comment type="subunit">
    <text evidence="2">Homodimer. Interacts with ITGA4:ITGB1. Interacts with spectrins SPTA1 and SPTB1.</text>
</comment>
<comment type="subcellular location">
    <subcellularLocation>
        <location evidence="2">Cell membrane</location>
        <topology evidence="2">Single-pass type I membrane protein</topology>
    </subcellularLocation>
</comment>
<comment type="PTM">
    <text evidence="2">Epinephrine-stimulated phosphorylation of Ser-621 by PKA enhances adhesion to laminin. Ser-621 can also be phosphorylated by AKT1.</text>
</comment>
<reference key="1">
    <citation type="journal article" date="2002" name="Mol. Cell. Proteomics">
        <title>Vascular proteomics and subtractive antibody expression cloning.</title>
        <authorList>
            <person name="Shusta E.V."/>
            <person name="Boado R.J."/>
            <person name="Pardridge W.M."/>
        </authorList>
    </citation>
    <scope>NUCLEOTIDE SEQUENCE [MRNA]</scope>
</reference>
<reference key="2">
    <citation type="submission" date="2006-09" db="EMBL/GenBank/DDBJ databases">
        <authorList>
            <consortium name="NIH - Mammalian Gene Collection (MGC) project"/>
        </authorList>
    </citation>
    <scope>NUCLEOTIDE SEQUENCE [LARGE SCALE MRNA]</scope>
    <source>
        <strain>Hereford</strain>
        <tissue>Fetal skin</tissue>
    </source>
</reference>
<reference key="3">
    <citation type="journal article" date="2000" name="J. Cereb. Blood Flow Metab.">
        <title>Selective Lutheran glycoprotein gene expression at the blood-brain barrier in normal brain and in human brain tumors.</title>
        <authorList>
            <person name="Boado R.J."/>
            <person name="Li J.Y."/>
            <person name="Pardridge W.M."/>
        </authorList>
    </citation>
    <scope>PARTIAL NUCLEOTIDE SEQUENCE [MRNA]</scope>
</reference>
<gene>
    <name type="primary">BCAM</name>
</gene>
<accession>Q9MZ08</accession>
<dbReference type="EMBL" id="AF270512">
    <property type="protein sequence ID" value="AAF81749.2"/>
    <property type="molecule type" value="mRNA"/>
</dbReference>
<dbReference type="EMBL" id="BC123496">
    <property type="protein sequence ID" value="AAI23497.1"/>
    <property type="molecule type" value="mRNA"/>
</dbReference>
<dbReference type="RefSeq" id="NP_777166.1">
    <property type="nucleotide sequence ID" value="NM_174741.2"/>
</dbReference>
<dbReference type="SMR" id="Q9MZ08"/>
<dbReference type="FunCoup" id="Q9MZ08">
    <property type="interactions" value="377"/>
</dbReference>
<dbReference type="STRING" id="9913.ENSBTAP00000012495"/>
<dbReference type="GlyCosmos" id="Q9MZ08">
    <property type="glycosylation" value="3 sites, No reported glycans"/>
</dbReference>
<dbReference type="GlyGen" id="Q9MZ08">
    <property type="glycosylation" value="3 sites"/>
</dbReference>
<dbReference type="PaxDb" id="9913-ENSBTAP00000012495"/>
<dbReference type="PeptideAtlas" id="Q9MZ08"/>
<dbReference type="Ensembl" id="ENSBTAT00000012495.5">
    <property type="protein sequence ID" value="ENSBTAP00000012495.3"/>
    <property type="gene ID" value="ENSBTAG00000009495.5"/>
</dbReference>
<dbReference type="GeneID" id="282862"/>
<dbReference type="KEGG" id="bta:282862"/>
<dbReference type="CTD" id="4059"/>
<dbReference type="VEuPathDB" id="HostDB:ENSBTAG00000009495"/>
<dbReference type="VGNC" id="VGNC:49138">
    <property type="gene designation" value="BCAM"/>
</dbReference>
<dbReference type="eggNOG" id="ENOG502QWC8">
    <property type="taxonomic scope" value="Eukaryota"/>
</dbReference>
<dbReference type="GeneTree" id="ENSGT00940000161038"/>
<dbReference type="HOGENOM" id="CLU_028888_1_0_1"/>
<dbReference type="InParanoid" id="Q9MZ08"/>
<dbReference type="OMA" id="GYMTIRT"/>
<dbReference type="OrthoDB" id="10010939at2759"/>
<dbReference type="TreeFam" id="TF330534"/>
<dbReference type="Proteomes" id="UP000009136">
    <property type="component" value="Chromosome 18"/>
</dbReference>
<dbReference type="Bgee" id="ENSBTAG00000009495">
    <property type="expression patterns" value="Expressed in thyroid gland and 102 other cell types or tissues"/>
</dbReference>
<dbReference type="GO" id="GO:0005886">
    <property type="term" value="C:plasma membrane"/>
    <property type="evidence" value="ECO:0000318"/>
    <property type="project" value="GO_Central"/>
</dbReference>
<dbReference type="GO" id="GO:0005055">
    <property type="term" value="F:laminin receptor activity"/>
    <property type="evidence" value="ECO:0000318"/>
    <property type="project" value="GO_Central"/>
</dbReference>
<dbReference type="GO" id="GO:0001525">
    <property type="term" value="P:angiogenesis"/>
    <property type="evidence" value="ECO:0000318"/>
    <property type="project" value="GO_Central"/>
</dbReference>
<dbReference type="CDD" id="cd00096">
    <property type="entry name" value="Ig"/>
    <property type="match status" value="3"/>
</dbReference>
<dbReference type="FunFam" id="2.60.40.10:FF:001535">
    <property type="entry name" value="Basal cell adhesion molecule"/>
    <property type="match status" value="1"/>
</dbReference>
<dbReference type="Gene3D" id="2.60.40.10">
    <property type="entry name" value="Immunoglobulins"/>
    <property type="match status" value="5"/>
</dbReference>
<dbReference type="InterPro" id="IPR013162">
    <property type="entry name" value="CD80_C2-set"/>
</dbReference>
<dbReference type="InterPro" id="IPR007110">
    <property type="entry name" value="Ig-like_dom"/>
</dbReference>
<dbReference type="InterPro" id="IPR036179">
    <property type="entry name" value="Ig-like_dom_sf"/>
</dbReference>
<dbReference type="InterPro" id="IPR013783">
    <property type="entry name" value="Ig-like_fold"/>
</dbReference>
<dbReference type="InterPro" id="IPR003599">
    <property type="entry name" value="Ig_sub"/>
</dbReference>
<dbReference type="InterPro" id="IPR003598">
    <property type="entry name" value="Ig_sub2"/>
</dbReference>
<dbReference type="InterPro" id="IPR051116">
    <property type="entry name" value="Surface_Rcpt/Adhesion_Mol"/>
</dbReference>
<dbReference type="PANTHER" id="PTHR11973:SF17">
    <property type="entry name" value="BASAL CELL ADHESION MOLECULE"/>
    <property type="match status" value="1"/>
</dbReference>
<dbReference type="PANTHER" id="PTHR11973">
    <property type="entry name" value="CELL SURFACE GLYCOPROTEIN MUC18-RELATED"/>
    <property type="match status" value="1"/>
</dbReference>
<dbReference type="Pfam" id="PF08205">
    <property type="entry name" value="C2-set_2"/>
    <property type="match status" value="1"/>
</dbReference>
<dbReference type="Pfam" id="PF13927">
    <property type="entry name" value="Ig_3"/>
    <property type="match status" value="3"/>
</dbReference>
<dbReference type="SMART" id="SM00409">
    <property type="entry name" value="IG"/>
    <property type="match status" value="5"/>
</dbReference>
<dbReference type="SMART" id="SM00408">
    <property type="entry name" value="IGc2"/>
    <property type="match status" value="4"/>
</dbReference>
<dbReference type="SUPFAM" id="SSF48726">
    <property type="entry name" value="Immunoglobulin"/>
    <property type="match status" value="5"/>
</dbReference>
<dbReference type="PROSITE" id="PS50835">
    <property type="entry name" value="IG_LIKE"/>
    <property type="match status" value="5"/>
</dbReference>
<feature type="signal peptide" evidence="1">
    <location>
        <begin position="1"/>
        <end position="31"/>
    </location>
</feature>
<feature type="chain" id="PRO_0000383337" description="Basal cell adhesion molecule">
    <location>
        <begin position="32"/>
        <end position="628"/>
    </location>
</feature>
<feature type="topological domain" description="Extracellular" evidence="3">
    <location>
        <begin position="32"/>
        <end position="547"/>
    </location>
</feature>
<feature type="transmembrane region" description="Helical" evidence="3">
    <location>
        <begin position="548"/>
        <end position="568"/>
    </location>
</feature>
<feature type="topological domain" description="Cytoplasmic" evidence="3">
    <location>
        <begin position="569"/>
        <end position="628"/>
    </location>
</feature>
<feature type="domain" description="Ig-like V-type 1">
    <location>
        <begin position="32"/>
        <end position="142"/>
    </location>
</feature>
<feature type="domain" description="Ig-like V-type 2">
    <location>
        <begin position="150"/>
        <end position="253"/>
    </location>
</feature>
<feature type="domain" description="Ig-like C2-type 1">
    <location>
        <begin position="254"/>
        <end position="355"/>
    </location>
</feature>
<feature type="domain" description="Ig-like C2-type 2">
    <location>
        <begin position="355"/>
        <end position="441"/>
    </location>
</feature>
<feature type="domain" description="Ig-like C2-type 3">
    <location>
        <begin position="448"/>
        <end position="538"/>
    </location>
</feature>
<feature type="region of interest" description="Disordered" evidence="5">
    <location>
        <begin position="580"/>
        <end position="628"/>
    </location>
</feature>
<feature type="compositionally biased region" description="Gly residues" evidence="5">
    <location>
        <begin position="613"/>
        <end position="628"/>
    </location>
</feature>
<feature type="modified residue" description="Phosphoserine" evidence="2">
    <location>
        <position position="596"/>
    </location>
</feature>
<feature type="modified residue" description="Phosphoserine" evidence="2">
    <location>
        <position position="598"/>
    </location>
</feature>
<feature type="modified residue" description="Phosphoserine" evidence="2">
    <location>
        <position position="600"/>
    </location>
</feature>
<feature type="modified residue" description="Phosphoserine" evidence="2">
    <location>
        <position position="621"/>
    </location>
</feature>
<feature type="glycosylation site" description="N-linked (GlcNAc...) asparagine" evidence="3">
    <location>
        <position position="321"/>
    </location>
</feature>
<feature type="glycosylation site" description="N-linked (GlcNAc...) asparagine" evidence="3">
    <location>
        <position position="330"/>
    </location>
</feature>
<feature type="glycosylation site" description="N-linked (GlcNAc...) asparagine" evidence="3">
    <location>
        <position position="378"/>
    </location>
</feature>
<feature type="disulfide bond" evidence="4">
    <location>
        <begin position="53"/>
        <end position="125"/>
    </location>
</feature>
<feature type="disulfide bond" evidence="4">
    <location>
        <begin position="172"/>
        <end position="237"/>
    </location>
</feature>
<feature type="disulfide bond" evidence="4">
    <location>
        <begin position="291"/>
        <end position="337"/>
    </location>
</feature>
<feature type="disulfide bond" evidence="4">
    <location>
        <begin position="384"/>
        <end position="424"/>
    </location>
</feature>
<feature type="disulfide bond" evidence="4">
    <location>
        <begin position="473"/>
        <end position="522"/>
    </location>
</feature>
<sequence length="628" mass="68003">MEPPDARAGARRAPRLLVLALLLAAPPGSKAEVRLSVPPLVEVMRGESVTLDCSPLGTHDYFMLEWFLVDRSGARHRLASAELRGSELRDKELNSRGRSPPYQLDSQGRLVLPEAQVGDERDYVCVVKAGAAGTAEATARLKVFAKPEAPEVSPNKGILSVMDDFAQEIATCSSRNGNPAPQIMWYRNGQPLAVPLEVNSEGYMTTRTVREASGLLSLTSTLYLRLHKPDREASFHCSVHYYLPAGQHGRLDGPSFSLTLHYPTEHVLFWLGSQSTAEGWVREGDSVQLLCQGDGSPTPEYTFFWLQDKQEDVLKTSLEGNLTLERVQRNQSGTYGCRVEDFDVPEDAELSKTLELRVAYLDSLELSAGEELSLPLHNSTTVTCSARGLPTPTLYWTKDSAPMGEDPTLSLHSVTFDSAGTYTCEAYMPRIPLLSRTRSFRLLVQGTPELKAKETQPKAEGSWTEGDEVTLICYARGYPKPKLTWSQLGGSPTEPAPGGQGWVSSSLTLKVTSALSQDGVSCEASNPLGNTHHVFHFGTVAPQTSQAGVAVMAVAISVALLLLVVAVFYCMRRKGRPGCCQWGEKGSPPPGEPKLSHSGSQRPEQTGLLMGSASGGAKHGSGGFGDEC</sequence>
<keyword id="KW-0130">Cell adhesion</keyword>
<keyword id="KW-1003">Cell membrane</keyword>
<keyword id="KW-1015">Disulfide bond</keyword>
<keyword id="KW-0325">Glycoprotein</keyword>
<keyword id="KW-0393">Immunoglobulin domain</keyword>
<keyword id="KW-0472">Membrane</keyword>
<keyword id="KW-0597">Phosphoprotein</keyword>
<keyword id="KW-0675">Receptor</keyword>
<keyword id="KW-1185">Reference proteome</keyword>
<keyword id="KW-0677">Repeat</keyword>
<keyword id="KW-0732">Signal</keyword>
<keyword id="KW-0812">Transmembrane</keyword>
<keyword id="KW-1133">Transmembrane helix</keyword>
<proteinExistence type="evidence at transcript level"/>
<evidence type="ECO:0000250" key="1"/>
<evidence type="ECO:0000250" key="2">
    <source>
        <dbReference type="UniProtKB" id="P50895"/>
    </source>
</evidence>
<evidence type="ECO:0000255" key="3"/>
<evidence type="ECO:0000255" key="4">
    <source>
        <dbReference type="PROSITE-ProRule" id="PRU00114"/>
    </source>
</evidence>
<evidence type="ECO:0000256" key="5">
    <source>
        <dbReference type="SAM" id="MobiDB-lite"/>
    </source>
</evidence>
<organism>
    <name type="scientific">Bos taurus</name>
    <name type="common">Bovine</name>
    <dbReference type="NCBI Taxonomy" id="9913"/>
    <lineage>
        <taxon>Eukaryota</taxon>
        <taxon>Metazoa</taxon>
        <taxon>Chordata</taxon>
        <taxon>Craniata</taxon>
        <taxon>Vertebrata</taxon>
        <taxon>Euteleostomi</taxon>
        <taxon>Mammalia</taxon>
        <taxon>Eutheria</taxon>
        <taxon>Laurasiatheria</taxon>
        <taxon>Artiodactyla</taxon>
        <taxon>Ruminantia</taxon>
        <taxon>Pecora</taxon>
        <taxon>Bovidae</taxon>
        <taxon>Bovinae</taxon>
        <taxon>Bos</taxon>
    </lineage>
</organism>
<name>BCAM_BOVIN</name>